<protein>
    <recommendedName>
        <fullName evidence="1">UDP-N-acetylmuramoylalanine--D-glutamate ligase</fullName>
        <ecNumber evidence="1">6.3.2.9</ecNumber>
    </recommendedName>
    <alternativeName>
        <fullName evidence="1">D-glutamic acid-adding enzyme</fullName>
    </alternativeName>
    <alternativeName>
        <fullName evidence="1">UDP-N-acetylmuramoyl-L-alanyl-D-glutamate synthetase</fullName>
    </alternativeName>
</protein>
<sequence>MHDRLIDENPTCGFVRLGLDVRSRVIVLGLGATGLSTVRFLRCHGFECAVMDSRLAPPGLQDLREAFPDVPLFLGDFSRSALAAATHLVVSPGLSLDLAEIRESHRCGVRVFGDLDLFACCVRAPVVAITGANGKSTVTTLVGLMAKAAGVNAAVGGNLGTPMLDLLDAAAELYVLELSSFQLERSELFEADVATVLNISPDHMDRYPDLASYAEAKRRVFRGEGLMVLNQDDPLVAAMYRPGRRAVRFGLGSGDELDYSLARWEGRAWLLAKGVPLLPADEVRIKGRHNLANALAAVAIADACGFDRQAMVGVLRTFPGLDHRMQWVADIGGVAYVNDSKATNVGACIAALSGLEGKVVLIAGGDGKGADFSSLVPVAAEKLRAAVLMGRDGPLIDEVLKGVVPTIRVKTMFEAVRAARGVAQSGDTVLLAPACASLDQYEDYQERGRDFAATVRSLA</sequence>
<keyword id="KW-0067">ATP-binding</keyword>
<keyword id="KW-0131">Cell cycle</keyword>
<keyword id="KW-0132">Cell division</keyword>
<keyword id="KW-0133">Cell shape</keyword>
<keyword id="KW-0961">Cell wall biogenesis/degradation</keyword>
<keyword id="KW-0963">Cytoplasm</keyword>
<keyword id="KW-0436">Ligase</keyword>
<keyword id="KW-0547">Nucleotide-binding</keyword>
<keyword id="KW-0573">Peptidoglycan synthesis</keyword>
<keyword id="KW-1185">Reference proteome</keyword>
<organism>
    <name type="scientific">Methylococcus capsulatus (strain ATCC 33009 / NCIMB 11132 / Bath)</name>
    <dbReference type="NCBI Taxonomy" id="243233"/>
    <lineage>
        <taxon>Bacteria</taxon>
        <taxon>Pseudomonadati</taxon>
        <taxon>Pseudomonadota</taxon>
        <taxon>Gammaproteobacteria</taxon>
        <taxon>Methylococcales</taxon>
        <taxon>Methylococcaceae</taxon>
        <taxon>Methylococcus</taxon>
    </lineage>
</organism>
<dbReference type="EC" id="6.3.2.9" evidence="1"/>
<dbReference type="EMBL" id="AE017282">
    <property type="protein sequence ID" value="AAU91468.1"/>
    <property type="molecule type" value="Genomic_DNA"/>
</dbReference>
<dbReference type="RefSeq" id="WP_010961656.1">
    <property type="nucleotide sequence ID" value="NC_002977.6"/>
</dbReference>
<dbReference type="SMR" id="Q604V5"/>
<dbReference type="STRING" id="243233.MCA2431"/>
<dbReference type="GeneID" id="88224632"/>
<dbReference type="KEGG" id="mca:MCA2431"/>
<dbReference type="eggNOG" id="COG0771">
    <property type="taxonomic scope" value="Bacteria"/>
</dbReference>
<dbReference type="HOGENOM" id="CLU_032540_1_0_6"/>
<dbReference type="UniPathway" id="UPA00219"/>
<dbReference type="Proteomes" id="UP000006821">
    <property type="component" value="Chromosome"/>
</dbReference>
<dbReference type="GO" id="GO:0005737">
    <property type="term" value="C:cytoplasm"/>
    <property type="evidence" value="ECO:0007669"/>
    <property type="project" value="UniProtKB-SubCell"/>
</dbReference>
<dbReference type="GO" id="GO:0005524">
    <property type="term" value="F:ATP binding"/>
    <property type="evidence" value="ECO:0007669"/>
    <property type="project" value="UniProtKB-UniRule"/>
</dbReference>
<dbReference type="GO" id="GO:0008764">
    <property type="term" value="F:UDP-N-acetylmuramoylalanine-D-glutamate ligase activity"/>
    <property type="evidence" value="ECO:0007669"/>
    <property type="project" value="UniProtKB-UniRule"/>
</dbReference>
<dbReference type="GO" id="GO:0051301">
    <property type="term" value="P:cell division"/>
    <property type="evidence" value="ECO:0007669"/>
    <property type="project" value="UniProtKB-KW"/>
</dbReference>
<dbReference type="GO" id="GO:0071555">
    <property type="term" value="P:cell wall organization"/>
    <property type="evidence" value="ECO:0007669"/>
    <property type="project" value="UniProtKB-KW"/>
</dbReference>
<dbReference type="GO" id="GO:0009252">
    <property type="term" value="P:peptidoglycan biosynthetic process"/>
    <property type="evidence" value="ECO:0007669"/>
    <property type="project" value="UniProtKB-UniRule"/>
</dbReference>
<dbReference type="GO" id="GO:0008360">
    <property type="term" value="P:regulation of cell shape"/>
    <property type="evidence" value="ECO:0007669"/>
    <property type="project" value="UniProtKB-KW"/>
</dbReference>
<dbReference type="Gene3D" id="3.90.190.20">
    <property type="entry name" value="Mur ligase, C-terminal domain"/>
    <property type="match status" value="1"/>
</dbReference>
<dbReference type="Gene3D" id="3.40.1190.10">
    <property type="entry name" value="Mur-like, catalytic domain"/>
    <property type="match status" value="1"/>
</dbReference>
<dbReference type="Gene3D" id="3.40.50.720">
    <property type="entry name" value="NAD(P)-binding Rossmann-like Domain"/>
    <property type="match status" value="1"/>
</dbReference>
<dbReference type="HAMAP" id="MF_00639">
    <property type="entry name" value="MurD"/>
    <property type="match status" value="1"/>
</dbReference>
<dbReference type="InterPro" id="IPR036565">
    <property type="entry name" value="Mur-like_cat_sf"/>
</dbReference>
<dbReference type="InterPro" id="IPR004101">
    <property type="entry name" value="Mur_ligase_C"/>
</dbReference>
<dbReference type="InterPro" id="IPR036615">
    <property type="entry name" value="Mur_ligase_C_dom_sf"/>
</dbReference>
<dbReference type="InterPro" id="IPR013221">
    <property type="entry name" value="Mur_ligase_cen"/>
</dbReference>
<dbReference type="InterPro" id="IPR005762">
    <property type="entry name" value="MurD"/>
</dbReference>
<dbReference type="NCBIfam" id="TIGR01087">
    <property type="entry name" value="murD"/>
    <property type="match status" value="1"/>
</dbReference>
<dbReference type="PANTHER" id="PTHR43692">
    <property type="entry name" value="UDP-N-ACETYLMURAMOYLALANINE--D-GLUTAMATE LIGASE"/>
    <property type="match status" value="1"/>
</dbReference>
<dbReference type="PANTHER" id="PTHR43692:SF1">
    <property type="entry name" value="UDP-N-ACETYLMURAMOYLALANINE--D-GLUTAMATE LIGASE"/>
    <property type="match status" value="1"/>
</dbReference>
<dbReference type="Pfam" id="PF02875">
    <property type="entry name" value="Mur_ligase_C"/>
    <property type="match status" value="1"/>
</dbReference>
<dbReference type="Pfam" id="PF08245">
    <property type="entry name" value="Mur_ligase_M"/>
    <property type="match status" value="1"/>
</dbReference>
<dbReference type="Pfam" id="PF21799">
    <property type="entry name" value="MurD-like_N"/>
    <property type="match status" value="1"/>
</dbReference>
<dbReference type="SUPFAM" id="SSF51984">
    <property type="entry name" value="MurCD N-terminal domain"/>
    <property type="match status" value="1"/>
</dbReference>
<dbReference type="SUPFAM" id="SSF53623">
    <property type="entry name" value="MurD-like peptide ligases, catalytic domain"/>
    <property type="match status" value="1"/>
</dbReference>
<dbReference type="SUPFAM" id="SSF53244">
    <property type="entry name" value="MurD-like peptide ligases, peptide-binding domain"/>
    <property type="match status" value="1"/>
</dbReference>
<feature type="chain" id="PRO_0000109042" description="UDP-N-acetylmuramoylalanine--D-glutamate ligase">
    <location>
        <begin position="1"/>
        <end position="459"/>
    </location>
</feature>
<feature type="binding site" evidence="1">
    <location>
        <begin position="131"/>
        <end position="137"/>
    </location>
    <ligand>
        <name>ATP</name>
        <dbReference type="ChEBI" id="CHEBI:30616"/>
    </ligand>
</feature>
<accession>Q604V5</accession>
<comment type="function">
    <text evidence="1">Cell wall formation. Catalyzes the addition of glutamate to the nucleotide precursor UDP-N-acetylmuramoyl-L-alanine (UMA).</text>
</comment>
<comment type="catalytic activity">
    <reaction evidence="1">
        <text>UDP-N-acetyl-alpha-D-muramoyl-L-alanine + D-glutamate + ATP = UDP-N-acetyl-alpha-D-muramoyl-L-alanyl-D-glutamate + ADP + phosphate + H(+)</text>
        <dbReference type="Rhea" id="RHEA:16429"/>
        <dbReference type="ChEBI" id="CHEBI:15378"/>
        <dbReference type="ChEBI" id="CHEBI:29986"/>
        <dbReference type="ChEBI" id="CHEBI:30616"/>
        <dbReference type="ChEBI" id="CHEBI:43474"/>
        <dbReference type="ChEBI" id="CHEBI:83898"/>
        <dbReference type="ChEBI" id="CHEBI:83900"/>
        <dbReference type="ChEBI" id="CHEBI:456216"/>
        <dbReference type="EC" id="6.3.2.9"/>
    </reaction>
</comment>
<comment type="pathway">
    <text evidence="1">Cell wall biogenesis; peptidoglycan biosynthesis.</text>
</comment>
<comment type="subcellular location">
    <subcellularLocation>
        <location evidence="1">Cytoplasm</location>
    </subcellularLocation>
</comment>
<comment type="similarity">
    <text evidence="1">Belongs to the MurCDEF family.</text>
</comment>
<name>MURD_METCA</name>
<evidence type="ECO:0000255" key="1">
    <source>
        <dbReference type="HAMAP-Rule" id="MF_00639"/>
    </source>
</evidence>
<proteinExistence type="inferred from homology"/>
<gene>
    <name evidence="1" type="primary">murD</name>
    <name type="ordered locus">MCA2431</name>
</gene>
<reference key="1">
    <citation type="journal article" date="2004" name="PLoS Biol.">
        <title>Genomic insights into methanotrophy: the complete genome sequence of Methylococcus capsulatus (Bath).</title>
        <authorList>
            <person name="Ward N.L."/>
            <person name="Larsen O."/>
            <person name="Sakwa J."/>
            <person name="Bruseth L."/>
            <person name="Khouri H.M."/>
            <person name="Durkin A.S."/>
            <person name="Dimitrov G."/>
            <person name="Jiang L."/>
            <person name="Scanlan D."/>
            <person name="Kang K.H."/>
            <person name="Lewis M.R."/>
            <person name="Nelson K.E."/>
            <person name="Methe B.A."/>
            <person name="Wu M."/>
            <person name="Heidelberg J.F."/>
            <person name="Paulsen I.T."/>
            <person name="Fouts D.E."/>
            <person name="Ravel J."/>
            <person name="Tettelin H."/>
            <person name="Ren Q."/>
            <person name="Read T.D."/>
            <person name="DeBoy R.T."/>
            <person name="Seshadri R."/>
            <person name="Salzberg S.L."/>
            <person name="Jensen H.B."/>
            <person name="Birkeland N.K."/>
            <person name="Nelson W.C."/>
            <person name="Dodson R.J."/>
            <person name="Grindhaug S.H."/>
            <person name="Holt I.E."/>
            <person name="Eidhammer I."/>
            <person name="Jonasen I."/>
            <person name="Vanaken S."/>
            <person name="Utterback T.R."/>
            <person name="Feldblyum T.V."/>
            <person name="Fraser C.M."/>
            <person name="Lillehaug J.R."/>
            <person name="Eisen J.A."/>
        </authorList>
    </citation>
    <scope>NUCLEOTIDE SEQUENCE [LARGE SCALE GENOMIC DNA]</scope>
    <source>
        <strain>ATCC 33009 / NCIMB 11132 / Bath</strain>
    </source>
</reference>